<proteinExistence type="evidence at protein level"/>
<keyword id="KW-0020">Allergen</keyword>
<keyword id="KW-0903">Direct protein sequencing</keyword>
<keyword id="KW-1015">Disulfide bond</keyword>
<keyword id="KW-0677">Repeat</keyword>
<keyword id="KW-0964">Secreted</keyword>
<keyword id="KW-0732">Signal</keyword>
<feature type="signal peptide" evidence="2 3 4">
    <location>
        <begin position="1"/>
        <end position="16"/>
    </location>
</feature>
<feature type="chain" id="PRO_0000019863" description="Mite group 2 allergen Lep d 2">
    <location>
        <begin position="17"/>
        <end position="141"/>
    </location>
</feature>
<feature type="repeat" description="1">
    <location>
        <begin position="64"/>
        <end position="65"/>
    </location>
</feature>
<feature type="repeat" description="2">
    <location>
        <begin position="68"/>
        <end position="69"/>
    </location>
</feature>
<feature type="repeat" description="3">
    <location>
        <begin position="72"/>
        <end position="73"/>
    </location>
</feature>
<feature type="region of interest" description="3 X 2 AA repeats of K-V">
    <location>
        <begin position="64"/>
        <end position="73"/>
    </location>
</feature>
<feature type="disulfide bond" evidence="1">
    <location>
        <begin position="24"/>
        <end position="133"/>
    </location>
</feature>
<feature type="disulfide bond" evidence="1">
    <location>
        <begin position="37"/>
        <end position="42"/>
    </location>
</feature>
<feature type="disulfide bond" evidence="1">
    <location>
        <begin position="88"/>
        <end position="93"/>
    </location>
</feature>
<feature type="sequence variant" description="In Lep d 2.0201 and Lep d 2.0203.">
    <original>T</original>
    <variation>S</variation>
    <location>
        <position position="35"/>
    </location>
</feature>
<feature type="sequence variant" description="In Lep d 2.0201 and Lep d 2.0203.">
    <original>E</original>
    <variation>Q</variation>
    <location>
        <position position="48"/>
    </location>
</feature>
<feature type="sequence variant" description="In Lep d 2.0201 and Lep d 2.0203.">
    <original>E</original>
    <variation>D</variation>
    <location>
        <position position="53"/>
    </location>
</feature>
<feature type="sequence variant" description="In Lep d 2.0201 and Lep d 2.0203.">
    <original>A</original>
    <variation>N</variation>
    <location>
        <position position="63"/>
    </location>
</feature>
<feature type="sequence variant" description="In Lep d 2.0103.">
    <original>A</original>
    <variation>T</variation>
    <location>
        <position position="71"/>
    </location>
</feature>
<feature type="sequence variant" description="In Lep d 2.0201 and Lep d 2.0203.">
    <original>F</original>
    <variation>V</variation>
    <location>
        <position position="90"/>
    </location>
</feature>
<feature type="sequence variant" description="In Lep d 2.0201 and Lep d 2.0203.">
    <original>I</original>
    <variation>L</variation>
    <location>
        <position position="91"/>
    </location>
</feature>
<feature type="sequence variant" description="In Lep d 2.0201 and Lep d 2.0203.">
    <original>V</original>
    <variation>I</variation>
    <location>
        <position position="95"/>
    </location>
</feature>
<feature type="sequence variant" description="In Lep d 2.0201 and Lep d 2.0203.">
    <original>I</original>
    <variation>N</variation>
    <location>
        <position position="104"/>
    </location>
</feature>
<feature type="sequence variant" description="In Lep d 2.0201 and Lep d 2.0203.">
    <original>S</original>
    <variation>G</variation>
    <location>
        <position position="106"/>
    </location>
</feature>
<feature type="sequence variant" description="In Lep d 2.0201 and Lep d 2.0203.">
    <original>G</original>
    <variation>M</variation>
    <location>
        <position position="107"/>
    </location>
</feature>
<feature type="sequence variant" description="In Lep d 2.0201 and Lep d 2.0203.">
    <original>V</original>
    <variation>I</variation>
    <location>
        <position position="116"/>
    </location>
</feature>
<feature type="sequence variant" description="In Lep d 2.0203.">
    <original>A</original>
    <variation>V</variation>
    <location>
        <position position="118"/>
    </location>
</feature>
<feature type="sequence variant" description="In Lep d 2.0201 and Lep d 2.0203.">
    <original>I</original>
    <variation>V</variation>
    <location>
        <position position="125"/>
    </location>
</feature>
<feature type="sequence variant" description="In Lep d 2.0201 and Lep d 2.0203.">
    <original>V</original>
    <variation>I</variation>
    <location>
        <position position="136"/>
    </location>
</feature>
<feature type="sequence conflict" description="In Ref. 5; AA sequence." evidence="5" ref="5">
    <original>H</original>
    <variation>K</variation>
    <location>
        <position position="26"/>
    </location>
</feature>
<feature type="sequence conflict" description="In Ref. 5; AA sequence." evidence="5" ref="5">
    <original>T</original>
    <variation>K</variation>
    <location>
        <position position="30"/>
    </location>
</feature>
<protein>
    <recommendedName>
        <fullName>Mite group 2 allergen Lep d 2</fullName>
    </recommendedName>
    <alternativeName>
        <fullName>Allergen Lep d 1</fullName>
    </alternativeName>
    <alternativeName>
        <fullName>Allergen Lep d I</fullName>
    </alternativeName>
    <allergenName>Lep d 2</allergenName>
</protein>
<sequence>MMKFIALFALVAVASAGKMTFKDCGHGEVTELDITGCSGDTCVIHRGEKMTLEAKFAANQDTAKVTIKVLAKVAGTTIQVPGLETDGCKFIKCPVKKGEALDFIYSGTIPAITPKVKADVTAELIGDHGVMACGTVHGQVE</sequence>
<dbReference type="EMBL" id="X83875">
    <property type="protein sequence ID" value="CAA58755.1"/>
    <property type="molecule type" value="mRNA"/>
</dbReference>
<dbReference type="EMBL" id="X83876">
    <property type="protein sequence ID" value="CAA58756.1"/>
    <property type="molecule type" value="mRNA"/>
</dbReference>
<dbReference type="EMBL" id="X89014">
    <property type="protein sequence ID" value="CAA61419.1"/>
    <property type="molecule type" value="mRNA"/>
</dbReference>
<dbReference type="EMBL" id="AJ487972">
    <property type="protein sequence ID" value="CAD32313.1"/>
    <property type="molecule type" value="Genomic_DNA"/>
</dbReference>
<dbReference type="EMBL" id="AJ487973">
    <property type="protein sequence ID" value="CAD32314.1"/>
    <property type="molecule type" value="Genomic_DNA"/>
</dbReference>
<dbReference type="EMBL" id="X81399">
    <property type="protein sequence ID" value="CAA57160.1"/>
    <property type="molecule type" value="mRNA"/>
</dbReference>
<dbReference type="PIR" id="S66499">
    <property type="entry name" value="S66499"/>
</dbReference>
<dbReference type="PIR" id="S66500">
    <property type="entry name" value="S66500"/>
</dbReference>
<dbReference type="SMR" id="P80384"/>
<dbReference type="Allergome" id="439">
    <property type="allergen name" value="Lep d 2"/>
</dbReference>
<dbReference type="Allergome" id="440">
    <property type="allergen name" value="Lep d 2.0101"/>
</dbReference>
<dbReference type="Allergome" id="441">
    <property type="allergen name" value="Lep d 2.0201"/>
</dbReference>
<dbReference type="Allergome" id="442">
    <property type="allergen name" value="Lep d 2.0102"/>
</dbReference>
<dbReference type="Allergome" id="443">
    <property type="allergen name" value="Lep d 2.0202"/>
</dbReference>
<dbReference type="GO" id="GO:0005576">
    <property type="term" value="C:extracellular region"/>
    <property type="evidence" value="ECO:0007669"/>
    <property type="project" value="UniProtKB-SubCell"/>
</dbReference>
<dbReference type="GO" id="GO:0032934">
    <property type="term" value="F:sterol binding"/>
    <property type="evidence" value="ECO:0007669"/>
    <property type="project" value="InterPro"/>
</dbReference>
<dbReference type="GO" id="GO:0015918">
    <property type="term" value="P:sterol transport"/>
    <property type="evidence" value="ECO:0007669"/>
    <property type="project" value="InterPro"/>
</dbReference>
<dbReference type="CDD" id="cd00918">
    <property type="entry name" value="Der-p2_like"/>
    <property type="match status" value="1"/>
</dbReference>
<dbReference type="FunFam" id="2.60.40.770:FF:000001">
    <property type="entry name" value="NPC intracellular cholesterol transporter 2"/>
    <property type="match status" value="1"/>
</dbReference>
<dbReference type="Gene3D" id="2.60.40.770">
    <property type="match status" value="1"/>
</dbReference>
<dbReference type="InterPro" id="IPR014756">
    <property type="entry name" value="Ig_E-set"/>
</dbReference>
<dbReference type="InterPro" id="IPR003172">
    <property type="entry name" value="ML_dom"/>
</dbReference>
<dbReference type="InterPro" id="IPR039670">
    <property type="entry name" value="NPC2-like"/>
</dbReference>
<dbReference type="PANTHER" id="PTHR11306">
    <property type="entry name" value="NIEMANN PICK TYPE C2 PROTEIN NPC2-RELATED"/>
    <property type="match status" value="1"/>
</dbReference>
<dbReference type="PANTHER" id="PTHR11306:SF68">
    <property type="entry name" value="NPC INTRACELLULAR CHOLESTEROL TRANSPORTER 2"/>
    <property type="match status" value="1"/>
</dbReference>
<dbReference type="Pfam" id="PF02221">
    <property type="entry name" value="E1_DerP2_DerF2"/>
    <property type="match status" value="1"/>
</dbReference>
<dbReference type="SMART" id="SM00737">
    <property type="entry name" value="ML"/>
    <property type="match status" value="1"/>
</dbReference>
<dbReference type="SUPFAM" id="SSF81296">
    <property type="entry name" value="E set domains"/>
    <property type="match status" value="1"/>
</dbReference>
<comment type="subunit">
    <text>Monomer.</text>
</comment>
<comment type="subcellular location">
    <subcellularLocation>
        <location>Secreted</location>
    </subcellularLocation>
</comment>
<comment type="polymorphism">
    <text>The sequence shown is that of isoform Lep d 2.0101.</text>
</comment>
<comment type="allergen">
    <text>Causes an allergic reaction in human. Common symptoms of mite allergy are bronchial asthma, allergic rhinitis and conjunctivitis.</text>
</comment>
<comment type="similarity">
    <text evidence="5">Belongs to the NPC2 family.</text>
</comment>
<evidence type="ECO:0000250" key="1"/>
<evidence type="ECO:0000269" key="2">
    <source>
    </source>
</evidence>
<evidence type="ECO:0000269" key="3">
    <source>
    </source>
</evidence>
<evidence type="ECO:0000269" key="4">
    <source ref="4"/>
</evidence>
<evidence type="ECO:0000305" key="5"/>
<name>ALL2_LEPDS</name>
<organism>
    <name type="scientific">Lepidoglyphus destructor</name>
    <name type="common">Storage mite</name>
    <name type="synonym">Glycyphagus destructor</name>
    <dbReference type="NCBI Taxonomy" id="36936"/>
    <lineage>
        <taxon>Eukaryota</taxon>
        <taxon>Metazoa</taxon>
        <taxon>Ecdysozoa</taxon>
        <taxon>Arthropoda</taxon>
        <taxon>Chelicerata</taxon>
        <taxon>Arachnida</taxon>
        <taxon>Acari</taxon>
        <taxon>Acariformes</taxon>
        <taxon>Sarcoptiformes</taxon>
        <taxon>Astigmata</taxon>
        <taxon>Glycyphagoidea</taxon>
        <taxon>Glycyphagidae</taxon>
        <taxon>Lepidoglyphus</taxon>
    </lineage>
</organism>
<reference key="1">
    <citation type="journal article" date="1995" name="FEBS Lett.">
        <title>cDNA analysis of the mite allergen Lep d 1 identifies two different isoallergens and variants.</title>
        <authorList>
            <person name="Schmidt M."/>
            <person name="van der Ploeg I."/>
            <person name="Olsson S."/>
            <person name="van Hage-Hamsten M."/>
        </authorList>
    </citation>
    <scope>NUCLEOTIDE SEQUENCE [MRNA] (LEP D 2.0101 AND LEP D 2.0201)</scope>
</reference>
<reference key="2">
    <citation type="journal article" date="2003" name="Eur. J. Biochem.">
        <title>Lep d 2 polymorphisms in wild and cultured Lepidoglyphus destructor mites.</title>
        <authorList>
            <person name="Kaiser L."/>
            <person name="Gafvelin G."/>
            <person name="Johansson E."/>
            <person name="van Hage-Hamsten M."/>
            <person name="Rasool O."/>
        </authorList>
    </citation>
    <scope>NUCLEOTIDE SEQUENCE (LEP D 2.0103 AND LEP D 2.0203)</scope>
</reference>
<reference key="3">
    <citation type="journal article" date="1994" name="Eur. J. Biochem.">
        <title>Primary structure of Lep d I, the main Lepidoglyphus destructor allergen.</title>
        <authorList>
            <person name="Varela J."/>
            <person name="Ventas P."/>
            <person name="Carreira J."/>
            <person name="Barbas J.A."/>
            <person name="Gimenez-Gallego G."/>
            <person name="Polo F."/>
        </authorList>
    </citation>
    <scope>NUCLEOTIDE SEQUENCE [MRNA] OF 44-141</scope>
    <scope>PROTEIN SEQUENCE OF 17-140</scope>
</reference>
<reference key="4">
    <citation type="journal article" date="1991" name="J. Allergy Clin. Immunol.">
        <title>Barn allergy: isolation and characterization of the major allergens of storagemites: L. destructor.</title>
        <authorList>
            <person name="Muthiah R."/>
            <person name="Miller M."/>
            <person name="Kagen S."/>
        </authorList>
    </citation>
    <scope>PROTEIN SEQUENCE OF 17-45</scope>
</reference>
<reference key="5">
    <citation type="journal article" date="1992" name="Lancet">
        <title>N-terminal aminoacid sequence of principal allergen of storage mite Lepidoglyphus destructor.</title>
        <authorList>
            <person name="van Hage-Hamsten M."/>
            <person name="Bergman T."/>
            <person name="Johansson E."/>
            <person name="Persson B."/>
            <person name="Joernvall H."/>
            <person name="Haerfast B."/>
            <person name="Johansson S.G.O."/>
        </authorList>
    </citation>
    <scope>PROTEIN SEQUENCE OF 17-34</scope>
</reference>
<accession>P80384</accession>
<accession>Q8MYK7</accession>
<accession>Q8MYK8</accession>